<organism>
    <name type="scientific">Arabidopsis thaliana</name>
    <name type="common">Mouse-ear cress</name>
    <dbReference type="NCBI Taxonomy" id="3702"/>
    <lineage>
        <taxon>Eukaryota</taxon>
        <taxon>Viridiplantae</taxon>
        <taxon>Streptophyta</taxon>
        <taxon>Embryophyta</taxon>
        <taxon>Tracheophyta</taxon>
        <taxon>Spermatophyta</taxon>
        <taxon>Magnoliopsida</taxon>
        <taxon>eudicotyledons</taxon>
        <taxon>Gunneridae</taxon>
        <taxon>Pentapetalae</taxon>
        <taxon>rosids</taxon>
        <taxon>malvids</taxon>
        <taxon>Brassicales</taxon>
        <taxon>Brassicaceae</taxon>
        <taxon>Camelineae</taxon>
        <taxon>Arabidopsis</taxon>
    </lineage>
</organism>
<protein>
    <recommendedName>
        <fullName>UPF0540 protein At1g62000</fullName>
    </recommendedName>
</protein>
<comment type="similarity">
    <text evidence="3">Belongs to the UPF0540 family.</text>
</comment>
<accession>Q39168</accession>
<gene>
    <name type="ordered locus">At1g62000</name>
    <name type="ORF">F8K4.19</name>
</gene>
<feature type="signal peptide" evidence="1">
    <location>
        <begin position="1"/>
        <end position="21"/>
    </location>
</feature>
<feature type="chain" id="PRO_0000326469" description="UPF0540 protein At1g62000">
    <location>
        <begin position="22"/>
        <end position="148"/>
    </location>
</feature>
<feature type="region of interest" description="Disordered" evidence="2">
    <location>
        <begin position="123"/>
        <end position="148"/>
    </location>
</feature>
<feature type="compositionally biased region" description="Low complexity" evidence="2">
    <location>
        <begin position="123"/>
        <end position="132"/>
    </location>
</feature>
<dbReference type="EMBL" id="X91954">
    <property type="protein sequence ID" value="CAA63020.1"/>
    <property type="molecule type" value="mRNA"/>
</dbReference>
<dbReference type="EMBL" id="AC004392">
    <property type="protein sequence ID" value="AAC28515.1"/>
    <property type="molecule type" value="Genomic_DNA"/>
</dbReference>
<dbReference type="EMBL" id="CP002684">
    <property type="protein sequence ID" value="AEE33912.1"/>
    <property type="molecule type" value="Genomic_DNA"/>
</dbReference>
<dbReference type="EMBL" id="BT010584">
    <property type="protein sequence ID" value="AAQ89606.1"/>
    <property type="molecule type" value="mRNA"/>
</dbReference>
<dbReference type="EMBL" id="BT020616">
    <property type="protein sequence ID" value="AAW81724.1"/>
    <property type="molecule type" value="mRNA"/>
</dbReference>
<dbReference type="EMBL" id="AK227274">
    <property type="protein sequence ID" value="BAE99298.1"/>
    <property type="molecule type" value="mRNA"/>
</dbReference>
<dbReference type="PIR" id="T02144">
    <property type="entry name" value="T02144"/>
</dbReference>
<dbReference type="RefSeq" id="NP_176391.1">
    <property type="nucleotide sequence ID" value="NM_104880.3"/>
</dbReference>
<dbReference type="FunCoup" id="Q39168">
    <property type="interactions" value="17"/>
</dbReference>
<dbReference type="iPTMnet" id="Q39168"/>
<dbReference type="PaxDb" id="3702-AT1G62000.1"/>
<dbReference type="ProteomicsDB" id="228673"/>
<dbReference type="EnsemblPlants" id="AT1G62000.1">
    <property type="protein sequence ID" value="AT1G62000.1"/>
    <property type="gene ID" value="AT1G62000"/>
</dbReference>
<dbReference type="GeneID" id="842495"/>
<dbReference type="Gramene" id="AT1G62000.1">
    <property type="protein sequence ID" value="AT1G62000.1"/>
    <property type="gene ID" value="AT1G62000"/>
</dbReference>
<dbReference type="KEGG" id="ath:AT1G62000"/>
<dbReference type="Araport" id="AT1G62000"/>
<dbReference type="TAIR" id="AT1G62000">
    <property type="gene designation" value="TBA1"/>
</dbReference>
<dbReference type="HOGENOM" id="CLU_1770577_0_0_1"/>
<dbReference type="InParanoid" id="Q39168"/>
<dbReference type="OMA" id="LVKKIIW"/>
<dbReference type="PhylomeDB" id="Q39168"/>
<dbReference type="PRO" id="PR:Q39168"/>
<dbReference type="Proteomes" id="UP000006548">
    <property type="component" value="Chromosome 1"/>
</dbReference>
<dbReference type="ExpressionAtlas" id="Q39168">
    <property type="expression patterns" value="baseline and differential"/>
</dbReference>
<dbReference type="GO" id="GO:0048046">
    <property type="term" value="C:apoplast"/>
    <property type="evidence" value="ECO:0000314"/>
    <property type="project" value="TAIR"/>
</dbReference>
<dbReference type="GO" id="GO:0010192">
    <property type="term" value="P:mucilage biosynthetic process"/>
    <property type="evidence" value="ECO:0000270"/>
    <property type="project" value="TAIR"/>
</dbReference>
<dbReference type="GO" id="GO:0010214">
    <property type="term" value="P:seed coat development"/>
    <property type="evidence" value="ECO:0000270"/>
    <property type="project" value="TAIR"/>
</dbReference>
<evidence type="ECO:0000255" key="1"/>
<evidence type="ECO:0000256" key="2">
    <source>
        <dbReference type="SAM" id="MobiDB-lite"/>
    </source>
</evidence>
<evidence type="ECO:0000305" key="3"/>
<reference key="1">
    <citation type="submission" date="1995-10" db="EMBL/GenBank/DDBJ databases">
        <authorList>
            <person name="Grellet F."/>
            <person name="Cooke R."/>
            <person name="Laudie M."/>
            <person name="Raynal M."/>
            <person name="Delseny M."/>
        </authorList>
    </citation>
    <scope>NUCLEOTIDE SEQUENCE [MRNA]</scope>
    <source>
        <strain>cv. Columbia</strain>
    </source>
</reference>
<reference key="2">
    <citation type="journal article" date="2000" name="Nature">
        <title>Sequence and analysis of chromosome 1 of the plant Arabidopsis thaliana.</title>
        <authorList>
            <person name="Theologis A."/>
            <person name="Ecker J.R."/>
            <person name="Palm C.J."/>
            <person name="Federspiel N.A."/>
            <person name="Kaul S."/>
            <person name="White O."/>
            <person name="Alonso J."/>
            <person name="Altafi H."/>
            <person name="Araujo R."/>
            <person name="Bowman C.L."/>
            <person name="Brooks S.Y."/>
            <person name="Buehler E."/>
            <person name="Chan A."/>
            <person name="Chao Q."/>
            <person name="Chen H."/>
            <person name="Cheuk R.F."/>
            <person name="Chin C.W."/>
            <person name="Chung M.K."/>
            <person name="Conn L."/>
            <person name="Conway A.B."/>
            <person name="Conway A.R."/>
            <person name="Creasy T.H."/>
            <person name="Dewar K."/>
            <person name="Dunn P."/>
            <person name="Etgu P."/>
            <person name="Feldblyum T.V."/>
            <person name="Feng J.-D."/>
            <person name="Fong B."/>
            <person name="Fujii C.Y."/>
            <person name="Gill J.E."/>
            <person name="Goldsmith A.D."/>
            <person name="Haas B."/>
            <person name="Hansen N.F."/>
            <person name="Hughes B."/>
            <person name="Huizar L."/>
            <person name="Hunter J.L."/>
            <person name="Jenkins J."/>
            <person name="Johnson-Hopson C."/>
            <person name="Khan S."/>
            <person name="Khaykin E."/>
            <person name="Kim C.J."/>
            <person name="Koo H.L."/>
            <person name="Kremenetskaia I."/>
            <person name="Kurtz D.B."/>
            <person name="Kwan A."/>
            <person name="Lam B."/>
            <person name="Langin-Hooper S."/>
            <person name="Lee A."/>
            <person name="Lee J.M."/>
            <person name="Lenz C.A."/>
            <person name="Li J.H."/>
            <person name="Li Y.-P."/>
            <person name="Lin X."/>
            <person name="Liu S.X."/>
            <person name="Liu Z.A."/>
            <person name="Luros J.S."/>
            <person name="Maiti R."/>
            <person name="Marziali A."/>
            <person name="Militscher J."/>
            <person name="Miranda M."/>
            <person name="Nguyen M."/>
            <person name="Nierman W.C."/>
            <person name="Osborne B.I."/>
            <person name="Pai G."/>
            <person name="Peterson J."/>
            <person name="Pham P.K."/>
            <person name="Rizzo M."/>
            <person name="Rooney T."/>
            <person name="Rowley D."/>
            <person name="Sakano H."/>
            <person name="Salzberg S.L."/>
            <person name="Schwartz J.R."/>
            <person name="Shinn P."/>
            <person name="Southwick A.M."/>
            <person name="Sun H."/>
            <person name="Tallon L.J."/>
            <person name="Tambunga G."/>
            <person name="Toriumi M.J."/>
            <person name="Town C.D."/>
            <person name="Utterback T."/>
            <person name="Van Aken S."/>
            <person name="Vaysberg M."/>
            <person name="Vysotskaia V.S."/>
            <person name="Walker M."/>
            <person name="Wu D."/>
            <person name="Yu G."/>
            <person name="Fraser C.M."/>
            <person name="Venter J.C."/>
            <person name="Davis R.W."/>
        </authorList>
    </citation>
    <scope>NUCLEOTIDE SEQUENCE [LARGE SCALE GENOMIC DNA]</scope>
    <source>
        <strain>cv. Columbia</strain>
    </source>
</reference>
<reference key="3">
    <citation type="journal article" date="2017" name="Plant J.">
        <title>Araport11: a complete reannotation of the Arabidopsis thaliana reference genome.</title>
        <authorList>
            <person name="Cheng C.Y."/>
            <person name="Krishnakumar V."/>
            <person name="Chan A.P."/>
            <person name="Thibaud-Nissen F."/>
            <person name="Schobel S."/>
            <person name="Town C.D."/>
        </authorList>
    </citation>
    <scope>GENOME REANNOTATION</scope>
    <source>
        <strain>cv. Columbia</strain>
    </source>
</reference>
<reference key="4">
    <citation type="submission" date="2005-02" db="EMBL/GenBank/DDBJ databases">
        <title>Arabidopsis ORF clones.</title>
        <authorList>
            <person name="Kim C.J."/>
            <person name="Chen H."/>
            <person name="Cheuk R.F."/>
            <person name="Shinn P."/>
            <person name="Ecker J.R."/>
        </authorList>
    </citation>
    <scope>NUCLEOTIDE SEQUENCE [LARGE SCALE MRNA]</scope>
    <source>
        <strain>cv. Columbia</strain>
    </source>
</reference>
<reference key="5">
    <citation type="submission" date="2006-07" db="EMBL/GenBank/DDBJ databases">
        <title>Large-scale analysis of RIKEN Arabidopsis full-length (RAFL) cDNAs.</title>
        <authorList>
            <person name="Totoki Y."/>
            <person name="Seki M."/>
            <person name="Ishida J."/>
            <person name="Nakajima M."/>
            <person name="Enju A."/>
            <person name="Kamiya A."/>
            <person name="Narusaka M."/>
            <person name="Shin-i T."/>
            <person name="Nakagawa M."/>
            <person name="Sakamoto N."/>
            <person name="Oishi K."/>
            <person name="Kohara Y."/>
            <person name="Kobayashi M."/>
            <person name="Toyoda A."/>
            <person name="Sakaki Y."/>
            <person name="Sakurai T."/>
            <person name="Iida K."/>
            <person name="Akiyama K."/>
            <person name="Satou M."/>
            <person name="Toyoda T."/>
            <person name="Konagaya A."/>
            <person name="Carninci P."/>
            <person name="Kawai J."/>
            <person name="Hayashizaki Y."/>
            <person name="Shinozaki K."/>
        </authorList>
    </citation>
    <scope>NUCLEOTIDE SEQUENCE [LARGE SCALE MRNA]</scope>
    <source>
        <strain>cv. Columbia</strain>
    </source>
</reference>
<keyword id="KW-1185">Reference proteome</keyword>
<keyword id="KW-0732">Signal</keyword>
<proteinExistence type="evidence at transcript level"/>
<sequence length="148" mass="14872">MNATKFVVLLVIGILCAIVTARQVKDLSTETKLGASLPKTTTKGIGAQLSATGTTYSTSSVVSYANGFNNPKGPGANSFESANTFTSGQVTAKGRKARVSSTSASAAEGDAAAAVTRKAAAARANGKVASASRVKGSSEKKKGKGKKD</sequence>
<name>U540A_ARATH</name>